<reference key="1">
    <citation type="journal article" date="2004" name="Nature">
        <title>The DNA sequence and comparative analysis of human chromosome 10.</title>
        <authorList>
            <person name="Deloukas P."/>
            <person name="Earthrowl M.E."/>
            <person name="Grafham D.V."/>
            <person name="Rubenfield M."/>
            <person name="French L."/>
            <person name="Steward C.A."/>
            <person name="Sims S.K."/>
            <person name="Jones M.C."/>
            <person name="Searle S."/>
            <person name="Scott C."/>
            <person name="Howe K."/>
            <person name="Hunt S.E."/>
            <person name="Andrews T.D."/>
            <person name="Gilbert J.G.R."/>
            <person name="Swarbreck D."/>
            <person name="Ashurst J.L."/>
            <person name="Taylor A."/>
            <person name="Battles J."/>
            <person name="Bird C.P."/>
            <person name="Ainscough R."/>
            <person name="Almeida J.P."/>
            <person name="Ashwell R.I.S."/>
            <person name="Ambrose K.D."/>
            <person name="Babbage A.K."/>
            <person name="Bagguley C.L."/>
            <person name="Bailey J."/>
            <person name="Banerjee R."/>
            <person name="Bates K."/>
            <person name="Beasley H."/>
            <person name="Bray-Allen S."/>
            <person name="Brown A.J."/>
            <person name="Brown J.Y."/>
            <person name="Burford D.C."/>
            <person name="Burrill W."/>
            <person name="Burton J."/>
            <person name="Cahill P."/>
            <person name="Camire D."/>
            <person name="Carter N.P."/>
            <person name="Chapman J.C."/>
            <person name="Clark S.Y."/>
            <person name="Clarke G."/>
            <person name="Clee C.M."/>
            <person name="Clegg S."/>
            <person name="Corby N."/>
            <person name="Coulson A."/>
            <person name="Dhami P."/>
            <person name="Dutta I."/>
            <person name="Dunn M."/>
            <person name="Faulkner L."/>
            <person name="Frankish A."/>
            <person name="Frankland J.A."/>
            <person name="Garner P."/>
            <person name="Garnett J."/>
            <person name="Gribble S."/>
            <person name="Griffiths C."/>
            <person name="Grocock R."/>
            <person name="Gustafson E."/>
            <person name="Hammond S."/>
            <person name="Harley J.L."/>
            <person name="Hart E."/>
            <person name="Heath P.D."/>
            <person name="Ho T.P."/>
            <person name="Hopkins B."/>
            <person name="Horne J."/>
            <person name="Howden P.J."/>
            <person name="Huckle E."/>
            <person name="Hynds C."/>
            <person name="Johnson C."/>
            <person name="Johnson D."/>
            <person name="Kana A."/>
            <person name="Kay M."/>
            <person name="Kimberley A.M."/>
            <person name="Kershaw J.K."/>
            <person name="Kokkinaki M."/>
            <person name="Laird G.K."/>
            <person name="Lawlor S."/>
            <person name="Lee H.M."/>
            <person name="Leongamornlert D.A."/>
            <person name="Laird G."/>
            <person name="Lloyd C."/>
            <person name="Lloyd D.M."/>
            <person name="Loveland J."/>
            <person name="Lovell J."/>
            <person name="McLaren S."/>
            <person name="McLay K.E."/>
            <person name="McMurray A."/>
            <person name="Mashreghi-Mohammadi M."/>
            <person name="Matthews L."/>
            <person name="Milne S."/>
            <person name="Nickerson T."/>
            <person name="Nguyen M."/>
            <person name="Overton-Larty E."/>
            <person name="Palmer S.A."/>
            <person name="Pearce A.V."/>
            <person name="Peck A.I."/>
            <person name="Pelan S."/>
            <person name="Phillimore B."/>
            <person name="Porter K."/>
            <person name="Rice C.M."/>
            <person name="Rogosin A."/>
            <person name="Ross M.T."/>
            <person name="Sarafidou T."/>
            <person name="Sehra H.K."/>
            <person name="Shownkeen R."/>
            <person name="Skuce C.D."/>
            <person name="Smith M."/>
            <person name="Standring L."/>
            <person name="Sycamore N."/>
            <person name="Tester J."/>
            <person name="Thorpe A."/>
            <person name="Torcasso W."/>
            <person name="Tracey A."/>
            <person name="Tromans A."/>
            <person name="Tsolas J."/>
            <person name="Wall M."/>
            <person name="Walsh J."/>
            <person name="Wang H."/>
            <person name="Weinstock K."/>
            <person name="West A.P."/>
            <person name="Willey D.L."/>
            <person name="Whitehead S.L."/>
            <person name="Wilming L."/>
            <person name="Wray P.W."/>
            <person name="Young L."/>
            <person name="Chen Y."/>
            <person name="Lovering R.C."/>
            <person name="Moschonas N.K."/>
            <person name="Siebert R."/>
            <person name="Fechtel K."/>
            <person name="Bentley D."/>
            <person name="Durbin R.M."/>
            <person name="Hubbard T."/>
            <person name="Doucette-Stamm L."/>
            <person name="Beck S."/>
            <person name="Smith D.R."/>
            <person name="Rogers J."/>
        </authorList>
    </citation>
    <scope>NUCLEOTIDE SEQUENCE [LARGE SCALE GENOMIC DNA]</scope>
</reference>
<reference key="2">
    <citation type="submission" date="2005-09" db="EMBL/GenBank/DDBJ databases">
        <authorList>
            <person name="Mural R.J."/>
            <person name="Istrail S."/>
            <person name="Sutton G.G."/>
            <person name="Florea L."/>
            <person name="Halpern A.L."/>
            <person name="Mobarry C.M."/>
            <person name="Lippert R."/>
            <person name="Walenz B."/>
            <person name="Shatkay H."/>
            <person name="Dew I."/>
            <person name="Miller J.R."/>
            <person name="Flanigan M.J."/>
            <person name="Edwards N.J."/>
            <person name="Bolanos R."/>
            <person name="Fasulo D."/>
            <person name="Halldorsson B.V."/>
            <person name="Hannenhalli S."/>
            <person name="Turner R."/>
            <person name="Yooseph S."/>
            <person name="Lu F."/>
            <person name="Nusskern D.R."/>
            <person name="Shue B.C."/>
            <person name="Zheng X.H."/>
            <person name="Zhong F."/>
            <person name="Delcher A.L."/>
            <person name="Huson D.H."/>
            <person name="Kravitz S.A."/>
            <person name="Mouchard L."/>
            <person name="Reinert K."/>
            <person name="Remington K.A."/>
            <person name="Clark A.G."/>
            <person name="Waterman M.S."/>
            <person name="Eichler E.E."/>
            <person name="Adams M.D."/>
            <person name="Hunkapiller M.W."/>
            <person name="Myers E.W."/>
            <person name="Venter J.C."/>
        </authorList>
    </citation>
    <scope>NUCLEOTIDE SEQUENCE [LARGE SCALE GENOMIC DNA]</scope>
</reference>
<reference key="3">
    <citation type="journal article" date="2004" name="Genome Res.">
        <title>The status, quality, and expansion of the NIH full-length cDNA project: the Mammalian Gene Collection (MGC).</title>
        <authorList>
            <consortium name="The MGC Project Team"/>
        </authorList>
    </citation>
    <scope>NUCLEOTIDE SEQUENCE [LARGE SCALE MRNA]</scope>
    <source>
        <tissue>Skin</tissue>
    </source>
</reference>
<accession>Q8N4M7</accession>
<accession>Q5T2Z8</accession>
<proteinExistence type="evidence at transcript level"/>
<protein>
    <recommendedName>
        <fullName>Putative uncharacterized protein C10orf126</fullName>
    </recommendedName>
</protein>
<name>CJ126_HUMAN</name>
<dbReference type="EMBL" id="AL390248">
    <property type="status" value="NOT_ANNOTATED_CDS"/>
    <property type="molecule type" value="Genomic_DNA"/>
</dbReference>
<dbReference type="EMBL" id="CH471072">
    <property type="protein sequence ID" value="EAW86026.1"/>
    <property type="molecule type" value="Genomic_DNA"/>
</dbReference>
<dbReference type="EMBL" id="BC033839">
    <property type="status" value="NOT_ANNOTATED_CDS"/>
    <property type="molecule type" value="mRNA"/>
</dbReference>
<dbReference type="RefSeq" id="NP_001265451.1">
    <property type="nucleotide sequence ID" value="NM_001278522.1"/>
</dbReference>
<dbReference type="iPTMnet" id="Q8N4M7"/>
<dbReference type="PhosphoSitePlus" id="Q8N4M7"/>
<dbReference type="BioMuta" id="C10orf126"/>
<dbReference type="PaxDb" id="9606-ENSP00000484883"/>
<dbReference type="UCSC" id="uc057smh.1">
    <property type="organism name" value="human"/>
</dbReference>
<dbReference type="AGR" id="HGNC:28693"/>
<dbReference type="GeneCards" id="C10orf126"/>
<dbReference type="HGNC" id="HGNC:28693">
    <property type="gene designation" value="C10orf126"/>
</dbReference>
<dbReference type="neXtProt" id="NX_Q8N4M7"/>
<dbReference type="eggNOG" id="ENOG502TJ8J">
    <property type="taxonomic scope" value="Eukaryota"/>
</dbReference>
<dbReference type="InParanoid" id="Q8N4M7"/>
<dbReference type="PAN-GO" id="Q8N4M7">
    <property type="GO annotations" value="0 GO annotations based on evolutionary models"/>
</dbReference>
<dbReference type="PhylomeDB" id="Q8N4M7"/>
<dbReference type="TreeFam" id="TF354155"/>
<dbReference type="BioGRID-ORCS" id="283080">
    <property type="hits" value="3 hits in 943 CRISPR screens"/>
</dbReference>
<dbReference type="Pharos" id="Q8N4M7">
    <property type="development level" value="Tdark"/>
</dbReference>
<dbReference type="PRO" id="PR:Q8N4M7"/>
<dbReference type="Proteomes" id="UP000005640">
    <property type="component" value="Unplaced"/>
</dbReference>
<dbReference type="RNAct" id="Q8N4M7">
    <property type="molecule type" value="protein"/>
</dbReference>
<organism>
    <name type="scientific">Homo sapiens</name>
    <name type="common">Human</name>
    <dbReference type="NCBI Taxonomy" id="9606"/>
    <lineage>
        <taxon>Eukaryota</taxon>
        <taxon>Metazoa</taxon>
        <taxon>Chordata</taxon>
        <taxon>Craniata</taxon>
        <taxon>Vertebrata</taxon>
        <taxon>Euteleostomi</taxon>
        <taxon>Mammalia</taxon>
        <taxon>Eutheria</taxon>
        <taxon>Euarchontoglires</taxon>
        <taxon>Primates</taxon>
        <taxon>Haplorrhini</taxon>
        <taxon>Catarrhini</taxon>
        <taxon>Hominidae</taxon>
        <taxon>Homo</taxon>
    </lineage>
</organism>
<feature type="chain" id="PRO_0000279493" description="Putative uncharacterized protein C10orf126">
    <location>
        <begin position="1"/>
        <end position="172"/>
    </location>
</feature>
<keyword id="KW-1185">Reference proteome</keyword>
<sequence>MNHCIQFSPQSLQRWLILPCYDLKLPIWANTTEFCPHGPRRASQDPQLLAWLPDQSLEVSLELYDWNSMTFTLFLETVEPVAVESEGSGIFSFVWQQLIFPAEARWCFSWAQDCGLDGSFPGSAHTEPFGKAAAGQGSVAGKEAKKAGPGFHRQLLYLQFQKRCLFNYPELL</sequence>
<gene>
    <name type="primary">C10orf126</name>
</gene>